<reference key="1">
    <citation type="journal article" date="2007" name="J. Bacteriol.">
        <title>Genome sequence of Avery's virulent serotype 2 strain D39 of Streptococcus pneumoniae and comparison with that of unencapsulated laboratory strain R6.</title>
        <authorList>
            <person name="Lanie J.A."/>
            <person name="Ng W.-L."/>
            <person name="Kazmierczak K.M."/>
            <person name="Andrzejewski T.M."/>
            <person name="Davidsen T.M."/>
            <person name="Wayne K.J."/>
            <person name="Tettelin H."/>
            <person name="Glass J.I."/>
            <person name="Winkler M.E."/>
        </authorList>
    </citation>
    <scope>NUCLEOTIDE SEQUENCE [LARGE SCALE GENOMIC DNA]</scope>
    <source>
        <strain>D39 / NCTC 7466</strain>
    </source>
</reference>
<accession>Q04HZ0</accession>
<sequence length="502" mass="55850">MSQEKYIMAIDQGTTSSRAIIFNKKGEKVSSSQKEFTQIFPQAGWVEHNANEIWNSVQSVIAGAFIESGVKPNQIEAIGITNQRETTVVWDKKTGLPIYNAIVWQSRQTAPLAEQLKSQGYVEKFHEKTGLIIDAYFSATKVRWILDHVEGAQERAEKGELLFGTIDTWLVWKLTDGAAHVTDYSNAARTMLYNIKELKWDDEILEILNIPKAILPEVRSNSEIYGKTAPFHFYGGEVPISGMAGDQQAALFGQLAFEPGMVKNTYGTGSFIIMNTGEEMQLSENNLLTTIGYGINGKVYYALEGSIFIAGSAIQWLRDGLRMVENSPESEKYARDSHNNDEVYVVPAFTGLGAPYWNQNARGSVFGLTRGTSKEDFIKATLQSIAYQVRDIIDTMQVDTQTAIQVLKVDGGAAMNNFLMQFQADILGIDIARAKNLETTALGAAFLAGLSVGYWKDLDELKLLNETGELFEPSMNESRKEQLYKGWKKAVKATQVFAEVDD</sequence>
<name>GLPK_STRP2</name>
<gene>
    <name evidence="1" type="primary">glpK</name>
    <name type="ordered locus">SPD_2013</name>
</gene>
<keyword id="KW-0067">ATP-binding</keyword>
<keyword id="KW-0319">Glycerol metabolism</keyword>
<keyword id="KW-0418">Kinase</keyword>
<keyword id="KW-0547">Nucleotide-binding</keyword>
<keyword id="KW-0597">Phosphoprotein</keyword>
<keyword id="KW-1185">Reference proteome</keyword>
<keyword id="KW-0808">Transferase</keyword>
<proteinExistence type="inferred from homology"/>
<dbReference type="EC" id="2.7.1.30" evidence="1"/>
<dbReference type="EMBL" id="CP000410">
    <property type="protein sequence ID" value="ABJ54508.1"/>
    <property type="molecule type" value="Genomic_DNA"/>
</dbReference>
<dbReference type="RefSeq" id="WP_000076776.1">
    <property type="nucleotide sequence ID" value="NZ_JAMLJR010000007.1"/>
</dbReference>
<dbReference type="SMR" id="Q04HZ0"/>
<dbReference type="PaxDb" id="373153-SPD_2013"/>
<dbReference type="KEGG" id="spd:SPD_2013"/>
<dbReference type="eggNOG" id="COG0554">
    <property type="taxonomic scope" value="Bacteria"/>
</dbReference>
<dbReference type="HOGENOM" id="CLU_009281_2_3_9"/>
<dbReference type="BioCyc" id="SPNE373153:G1G6V-2160-MONOMER"/>
<dbReference type="UniPathway" id="UPA00618">
    <property type="reaction ID" value="UER00672"/>
</dbReference>
<dbReference type="Proteomes" id="UP000001452">
    <property type="component" value="Chromosome"/>
</dbReference>
<dbReference type="GO" id="GO:0005829">
    <property type="term" value="C:cytosol"/>
    <property type="evidence" value="ECO:0007669"/>
    <property type="project" value="TreeGrafter"/>
</dbReference>
<dbReference type="GO" id="GO:0005524">
    <property type="term" value="F:ATP binding"/>
    <property type="evidence" value="ECO:0007669"/>
    <property type="project" value="UniProtKB-UniRule"/>
</dbReference>
<dbReference type="GO" id="GO:0004370">
    <property type="term" value="F:glycerol kinase activity"/>
    <property type="evidence" value="ECO:0000250"/>
    <property type="project" value="UniProtKB"/>
</dbReference>
<dbReference type="GO" id="GO:0019563">
    <property type="term" value="P:glycerol catabolic process"/>
    <property type="evidence" value="ECO:0007669"/>
    <property type="project" value="UniProtKB-UniRule"/>
</dbReference>
<dbReference type="GO" id="GO:0006071">
    <property type="term" value="P:glycerol metabolic process"/>
    <property type="evidence" value="ECO:0000250"/>
    <property type="project" value="UniProtKB"/>
</dbReference>
<dbReference type="GO" id="GO:0006072">
    <property type="term" value="P:glycerol-3-phosphate metabolic process"/>
    <property type="evidence" value="ECO:0007669"/>
    <property type="project" value="InterPro"/>
</dbReference>
<dbReference type="CDD" id="cd07786">
    <property type="entry name" value="FGGY_EcGK_like"/>
    <property type="match status" value="1"/>
</dbReference>
<dbReference type="FunFam" id="3.30.420.40:FF:000007">
    <property type="entry name" value="Glycerol kinase"/>
    <property type="match status" value="1"/>
</dbReference>
<dbReference type="FunFam" id="3.30.420.40:FF:000008">
    <property type="entry name" value="Glycerol kinase"/>
    <property type="match status" value="1"/>
</dbReference>
<dbReference type="Gene3D" id="3.30.420.40">
    <property type="match status" value="2"/>
</dbReference>
<dbReference type="HAMAP" id="MF_00186">
    <property type="entry name" value="Glycerol_kin"/>
    <property type="match status" value="1"/>
</dbReference>
<dbReference type="InterPro" id="IPR043129">
    <property type="entry name" value="ATPase_NBD"/>
</dbReference>
<dbReference type="InterPro" id="IPR000577">
    <property type="entry name" value="Carb_kinase_FGGY"/>
</dbReference>
<dbReference type="InterPro" id="IPR018483">
    <property type="entry name" value="Carb_kinase_FGGY_CS"/>
</dbReference>
<dbReference type="InterPro" id="IPR018485">
    <property type="entry name" value="FGGY_C"/>
</dbReference>
<dbReference type="InterPro" id="IPR018484">
    <property type="entry name" value="FGGY_N"/>
</dbReference>
<dbReference type="InterPro" id="IPR005999">
    <property type="entry name" value="Glycerol_kin"/>
</dbReference>
<dbReference type="NCBIfam" id="TIGR01311">
    <property type="entry name" value="glycerol_kin"/>
    <property type="match status" value="1"/>
</dbReference>
<dbReference type="NCBIfam" id="NF000756">
    <property type="entry name" value="PRK00047.1"/>
    <property type="match status" value="1"/>
</dbReference>
<dbReference type="PANTHER" id="PTHR10196:SF69">
    <property type="entry name" value="GLYCEROL KINASE"/>
    <property type="match status" value="1"/>
</dbReference>
<dbReference type="PANTHER" id="PTHR10196">
    <property type="entry name" value="SUGAR KINASE"/>
    <property type="match status" value="1"/>
</dbReference>
<dbReference type="Pfam" id="PF02782">
    <property type="entry name" value="FGGY_C"/>
    <property type="match status" value="1"/>
</dbReference>
<dbReference type="Pfam" id="PF00370">
    <property type="entry name" value="FGGY_N"/>
    <property type="match status" value="1"/>
</dbReference>
<dbReference type="PIRSF" id="PIRSF000538">
    <property type="entry name" value="GlpK"/>
    <property type="match status" value="1"/>
</dbReference>
<dbReference type="SUPFAM" id="SSF53067">
    <property type="entry name" value="Actin-like ATPase domain"/>
    <property type="match status" value="2"/>
</dbReference>
<dbReference type="PROSITE" id="PS00933">
    <property type="entry name" value="FGGY_KINASES_1"/>
    <property type="match status" value="1"/>
</dbReference>
<dbReference type="PROSITE" id="PS00445">
    <property type="entry name" value="FGGY_KINASES_2"/>
    <property type="match status" value="1"/>
</dbReference>
<organism>
    <name type="scientific">Streptococcus pneumoniae serotype 2 (strain D39 / NCTC 7466)</name>
    <dbReference type="NCBI Taxonomy" id="373153"/>
    <lineage>
        <taxon>Bacteria</taxon>
        <taxon>Bacillati</taxon>
        <taxon>Bacillota</taxon>
        <taxon>Bacilli</taxon>
        <taxon>Lactobacillales</taxon>
        <taxon>Streptococcaceae</taxon>
        <taxon>Streptococcus</taxon>
    </lineage>
</organism>
<evidence type="ECO:0000255" key="1">
    <source>
        <dbReference type="HAMAP-Rule" id="MF_00186"/>
    </source>
</evidence>
<protein>
    <recommendedName>
        <fullName evidence="1">Glycerol kinase</fullName>
        <ecNumber evidence="1">2.7.1.30</ecNumber>
    </recommendedName>
    <alternativeName>
        <fullName evidence="1">ATP:glycerol 3-phosphotransferase</fullName>
    </alternativeName>
    <alternativeName>
        <fullName evidence="1">Glycerokinase</fullName>
        <shortName evidence="1">GK</shortName>
    </alternativeName>
</protein>
<comment type="function">
    <text evidence="1">Key enzyme in the regulation of glycerol uptake and metabolism. Catalyzes the phosphorylation of glycerol to yield sn-glycerol 3-phosphate.</text>
</comment>
<comment type="catalytic activity">
    <reaction evidence="1">
        <text>glycerol + ATP = sn-glycerol 3-phosphate + ADP + H(+)</text>
        <dbReference type="Rhea" id="RHEA:21644"/>
        <dbReference type="ChEBI" id="CHEBI:15378"/>
        <dbReference type="ChEBI" id="CHEBI:17754"/>
        <dbReference type="ChEBI" id="CHEBI:30616"/>
        <dbReference type="ChEBI" id="CHEBI:57597"/>
        <dbReference type="ChEBI" id="CHEBI:456216"/>
        <dbReference type="EC" id="2.7.1.30"/>
    </reaction>
</comment>
<comment type="activity regulation">
    <text evidence="1">Activated by phosphorylation and inhibited by fructose 1,6-bisphosphate (FBP).</text>
</comment>
<comment type="pathway">
    <text evidence="1">Polyol metabolism; glycerol degradation via glycerol kinase pathway; sn-glycerol 3-phosphate from glycerol: step 1/1.</text>
</comment>
<comment type="subunit">
    <text evidence="1">Homotetramer and homodimer (in equilibrium).</text>
</comment>
<comment type="PTM">
    <text evidence="1">The phosphoenolpyruvate-dependent sugar phosphotransferase system (PTS), including enzyme I, and histidine-containing protein (HPr) are required for the phosphorylation, which leads to the activation of the enzyme.</text>
</comment>
<comment type="similarity">
    <text evidence="1">Belongs to the FGGY kinase family.</text>
</comment>
<feature type="chain" id="PRO_1000020798" description="Glycerol kinase">
    <location>
        <begin position="1"/>
        <end position="502"/>
    </location>
</feature>
<feature type="binding site" evidence="1">
    <location>
        <position position="14"/>
    </location>
    <ligand>
        <name>ADP</name>
        <dbReference type="ChEBI" id="CHEBI:456216"/>
    </ligand>
</feature>
<feature type="binding site" evidence="1">
    <location>
        <position position="14"/>
    </location>
    <ligand>
        <name>ATP</name>
        <dbReference type="ChEBI" id="CHEBI:30616"/>
    </ligand>
</feature>
<feature type="binding site" evidence="1">
    <location>
        <position position="14"/>
    </location>
    <ligand>
        <name>sn-glycerol 3-phosphate</name>
        <dbReference type="ChEBI" id="CHEBI:57597"/>
    </ligand>
</feature>
<feature type="binding site" evidence="1">
    <location>
        <position position="15"/>
    </location>
    <ligand>
        <name>ATP</name>
        <dbReference type="ChEBI" id="CHEBI:30616"/>
    </ligand>
</feature>
<feature type="binding site" evidence="1">
    <location>
        <position position="16"/>
    </location>
    <ligand>
        <name>ATP</name>
        <dbReference type="ChEBI" id="CHEBI:30616"/>
    </ligand>
</feature>
<feature type="binding site" evidence="1">
    <location>
        <position position="18"/>
    </location>
    <ligand>
        <name>ADP</name>
        <dbReference type="ChEBI" id="CHEBI:456216"/>
    </ligand>
</feature>
<feature type="binding site" evidence="1">
    <location>
        <position position="84"/>
    </location>
    <ligand>
        <name>glycerol</name>
        <dbReference type="ChEBI" id="CHEBI:17754"/>
    </ligand>
</feature>
<feature type="binding site" evidence="1">
    <location>
        <position position="84"/>
    </location>
    <ligand>
        <name>sn-glycerol 3-phosphate</name>
        <dbReference type="ChEBI" id="CHEBI:57597"/>
    </ligand>
</feature>
<feature type="binding site" evidence="1">
    <location>
        <position position="85"/>
    </location>
    <ligand>
        <name>glycerol</name>
        <dbReference type="ChEBI" id="CHEBI:17754"/>
    </ligand>
</feature>
<feature type="binding site" evidence="1">
    <location>
        <position position="85"/>
    </location>
    <ligand>
        <name>sn-glycerol 3-phosphate</name>
        <dbReference type="ChEBI" id="CHEBI:57597"/>
    </ligand>
</feature>
<feature type="binding site" evidence="1">
    <location>
        <position position="136"/>
    </location>
    <ligand>
        <name>glycerol</name>
        <dbReference type="ChEBI" id="CHEBI:17754"/>
    </ligand>
</feature>
<feature type="binding site" evidence="1">
    <location>
        <position position="136"/>
    </location>
    <ligand>
        <name>sn-glycerol 3-phosphate</name>
        <dbReference type="ChEBI" id="CHEBI:57597"/>
    </ligand>
</feature>
<feature type="binding site" evidence="1">
    <location>
        <position position="246"/>
    </location>
    <ligand>
        <name>glycerol</name>
        <dbReference type="ChEBI" id="CHEBI:17754"/>
    </ligand>
</feature>
<feature type="binding site" evidence="1">
    <location>
        <position position="246"/>
    </location>
    <ligand>
        <name>sn-glycerol 3-phosphate</name>
        <dbReference type="ChEBI" id="CHEBI:57597"/>
    </ligand>
</feature>
<feature type="binding site" evidence="1">
    <location>
        <position position="247"/>
    </location>
    <ligand>
        <name>glycerol</name>
        <dbReference type="ChEBI" id="CHEBI:17754"/>
    </ligand>
</feature>
<feature type="binding site" evidence="1">
    <location>
        <position position="268"/>
    </location>
    <ligand>
        <name>ADP</name>
        <dbReference type="ChEBI" id="CHEBI:456216"/>
    </ligand>
</feature>
<feature type="binding site" evidence="1">
    <location>
        <position position="268"/>
    </location>
    <ligand>
        <name>ATP</name>
        <dbReference type="ChEBI" id="CHEBI:30616"/>
    </ligand>
</feature>
<feature type="binding site" evidence="1">
    <location>
        <position position="311"/>
    </location>
    <ligand>
        <name>ADP</name>
        <dbReference type="ChEBI" id="CHEBI:456216"/>
    </ligand>
</feature>
<feature type="binding site" evidence="1">
    <location>
        <position position="311"/>
    </location>
    <ligand>
        <name>ATP</name>
        <dbReference type="ChEBI" id="CHEBI:30616"/>
    </ligand>
</feature>
<feature type="binding site" evidence="1">
    <location>
        <position position="315"/>
    </location>
    <ligand>
        <name>ATP</name>
        <dbReference type="ChEBI" id="CHEBI:30616"/>
    </ligand>
</feature>
<feature type="binding site" evidence="1">
    <location>
        <position position="412"/>
    </location>
    <ligand>
        <name>ADP</name>
        <dbReference type="ChEBI" id="CHEBI:456216"/>
    </ligand>
</feature>
<feature type="binding site" evidence="1">
    <location>
        <position position="412"/>
    </location>
    <ligand>
        <name>ATP</name>
        <dbReference type="ChEBI" id="CHEBI:30616"/>
    </ligand>
</feature>
<feature type="binding site" evidence="1">
    <location>
        <position position="416"/>
    </location>
    <ligand>
        <name>ADP</name>
        <dbReference type="ChEBI" id="CHEBI:456216"/>
    </ligand>
</feature>
<feature type="modified residue" description="Phosphohistidine; by HPr" evidence="1">
    <location>
        <position position="232"/>
    </location>
</feature>